<gene>
    <name type="primary">ospF</name>
    <name type="synonym">mkaD</name>
    <name type="ordered locus">SDY_P013</name>
</gene>
<evidence type="ECO:0000250" key="1"/>
<evidence type="ECO:0000305" key="2"/>
<feature type="chain" id="PRO_0000299352" description="Phosphothreonine lyase OspF">
    <location>
        <begin position="1"/>
        <end position="239"/>
    </location>
</feature>
<feature type="active site" description="Proton donor" evidence="1">
    <location>
        <position position="104"/>
    </location>
</feature>
<feature type="active site" description="Proton acceptor" evidence="1">
    <location>
        <position position="134"/>
    </location>
</feature>
<accession>Q327I2</accession>
<dbReference type="EC" id="4.2.3.-"/>
<dbReference type="EMBL" id="CP000035">
    <property type="protein sequence ID" value="ABB64526.1"/>
    <property type="molecule type" value="Genomic_DNA"/>
</dbReference>
<dbReference type="RefSeq" id="WP_001121864.1">
    <property type="nucleotide sequence ID" value="NC_007607.1"/>
</dbReference>
<dbReference type="RefSeq" id="YP_406014.1">
    <property type="nucleotide sequence ID" value="NC_007607.1"/>
</dbReference>
<dbReference type="SMR" id="Q327I2"/>
<dbReference type="EnsemblBacteria" id="ABB64526">
    <property type="protein sequence ID" value="ABB64526"/>
    <property type="gene ID" value="SDY_P013"/>
</dbReference>
<dbReference type="KEGG" id="sdy:SDY_P013"/>
<dbReference type="HOGENOM" id="CLU_100525_0_0_6"/>
<dbReference type="Proteomes" id="UP000002716">
    <property type="component" value="Plasmid pSD1_197"/>
</dbReference>
<dbReference type="GO" id="GO:0005576">
    <property type="term" value="C:extracellular region"/>
    <property type="evidence" value="ECO:0007669"/>
    <property type="project" value="UniProtKB-SubCell"/>
</dbReference>
<dbReference type="GO" id="GO:0016829">
    <property type="term" value="F:lyase activity"/>
    <property type="evidence" value="ECO:0007669"/>
    <property type="project" value="UniProtKB-KW"/>
</dbReference>
<dbReference type="Gene3D" id="3.30.2430.10">
    <property type="entry name" value="phosphothreonine lyase"/>
    <property type="match status" value="1"/>
</dbReference>
<dbReference type="InterPro" id="IPR003519">
    <property type="entry name" value="OspF/SpvC"/>
</dbReference>
<dbReference type="InterPro" id="IPR038498">
    <property type="entry name" value="OspF/SpvC_sf"/>
</dbReference>
<dbReference type="NCBIfam" id="NF011781">
    <property type="entry name" value="PRK15245.1"/>
    <property type="match status" value="1"/>
</dbReference>
<dbReference type="Pfam" id="PF03536">
    <property type="entry name" value="VRP3"/>
    <property type="match status" value="1"/>
</dbReference>
<dbReference type="PRINTS" id="PR01342">
    <property type="entry name" value="SALVRPPROT"/>
</dbReference>
<organism>
    <name type="scientific">Shigella dysenteriae serotype 1 (strain Sd197)</name>
    <dbReference type="NCBI Taxonomy" id="300267"/>
    <lineage>
        <taxon>Bacteria</taxon>
        <taxon>Pseudomonadati</taxon>
        <taxon>Pseudomonadota</taxon>
        <taxon>Gammaproteobacteria</taxon>
        <taxon>Enterobacterales</taxon>
        <taxon>Enterobacteriaceae</taxon>
        <taxon>Shigella</taxon>
    </lineage>
</organism>
<geneLocation type="plasmid">
    <name>pSD1_197</name>
</geneLocation>
<comment type="function">
    <text evidence="1">Catalyzes the removal of the phosphate group from the phosphothreonine in the mitogen-activated protein kinases such as MAPK2/ERK2, MAPK3/ERK1, MAPK8 and MAPK14 in an irreversible reaction, thus preventing the downstream phosphorylation of histone H3. This epigenetic modification results in inhibition of the transcription of a specific subset of pro-inflammatory genes, and ultimately to a reduced immune response against the invading pathogen. The diminished immune response enhances the bacterium's ability to disseminate and multiply within the host (By similarity).</text>
</comment>
<comment type="subcellular location">
    <subcellularLocation>
        <location>Secreted</location>
    </subcellularLocation>
    <text evidence="1">Secreted via the type III secretion system (T3SS). Localizes in the nucleus of the infected cell (By similarity).</text>
</comment>
<comment type="similarity">
    <text evidence="2">Belongs to the phosphothreonine lyase family.</text>
</comment>
<sequence length="239" mass="27900">MPIKKPCLKLNLDSLNVVRSEIPQMLSANERLKNNFNILYNQIRQYPAYYFKVASNVPNYSDICQFFSVMYQGFQIVNHSGDVFIHACRENPQSKGDFVGDKFHISIAREQVPLAFQILSGLLFSEDSPIDKWKITDMNRVSQQSRVGIGAQFTLYVKSDQECSQYSALLLHKIRQFIMCLESNLLRSKIAPGEYPASDVRPEDWKYVSYRNELRSDRNGSERQEQMLREEPFYRLMIE</sequence>
<reference key="1">
    <citation type="journal article" date="2005" name="Nucleic Acids Res.">
        <title>Genome dynamics and diversity of Shigella species, the etiologic agents of bacillary dysentery.</title>
        <authorList>
            <person name="Yang F."/>
            <person name="Yang J."/>
            <person name="Zhang X."/>
            <person name="Chen L."/>
            <person name="Jiang Y."/>
            <person name="Yan Y."/>
            <person name="Tang X."/>
            <person name="Wang J."/>
            <person name="Xiong Z."/>
            <person name="Dong J."/>
            <person name="Xue Y."/>
            <person name="Zhu Y."/>
            <person name="Xu X."/>
            <person name="Sun L."/>
            <person name="Chen S."/>
            <person name="Nie H."/>
            <person name="Peng J."/>
            <person name="Xu J."/>
            <person name="Wang Y."/>
            <person name="Yuan Z."/>
            <person name="Wen Y."/>
            <person name="Yao Z."/>
            <person name="Shen Y."/>
            <person name="Qiang B."/>
            <person name="Hou Y."/>
            <person name="Yu J."/>
            <person name="Jin Q."/>
        </authorList>
    </citation>
    <scope>NUCLEOTIDE SEQUENCE [LARGE SCALE GENOMIC DNA]</scope>
    <source>
        <strain>Sd197</strain>
    </source>
</reference>
<name>OSPF_SHIDS</name>
<proteinExistence type="inferred from homology"/>
<protein>
    <recommendedName>
        <fullName>Phosphothreonine lyase OspF</fullName>
        <ecNumber>4.2.3.-</ecNumber>
    </recommendedName>
    <alternativeName>
        <fullName>Effector protein OspF</fullName>
    </alternativeName>
</protein>
<keyword id="KW-0456">Lyase</keyword>
<keyword id="KW-0614">Plasmid</keyword>
<keyword id="KW-1185">Reference proteome</keyword>
<keyword id="KW-0964">Secreted</keyword>
<keyword id="KW-0843">Virulence</keyword>